<accession>Q9H1M4</accession>
<accession>Q14DW7</accession>
<protein>
    <recommendedName>
        <fullName>Beta-defensin 127</fullName>
    </recommendedName>
    <alternativeName>
        <fullName>Beta-defensin 27</fullName>
        <shortName>DEFB-27</shortName>
    </alternativeName>
    <alternativeName>
        <fullName>Defensin, beta 127</fullName>
    </alternativeName>
</protein>
<name>DB127_HUMAN</name>
<feature type="signal peptide" evidence="4">
    <location>
        <begin position="1"/>
        <end position="20"/>
    </location>
</feature>
<feature type="peptide" id="PRO_0000007002" description="Beta-defensin 127">
    <location>
        <begin position="21"/>
        <end position="63"/>
    </location>
</feature>
<feature type="propeptide" id="PRO_0000007003" evidence="2">
    <location>
        <begin position="66"/>
        <end position="99"/>
    </location>
</feature>
<feature type="disulfide bond" evidence="1">
    <location>
        <begin position="24"/>
        <end position="53"/>
    </location>
</feature>
<feature type="disulfide bond" evidence="1">
    <location>
        <begin position="33"/>
        <end position="47"/>
    </location>
</feature>
<feature type="disulfide bond" evidence="1">
    <location>
        <begin position="37"/>
        <end position="54"/>
    </location>
</feature>
<feature type="sequence variant" id="VAR_048864" description="In dbSNP:rs12624954." evidence="3">
    <original>G</original>
    <variation>R</variation>
    <location>
        <position position="31"/>
    </location>
</feature>
<feature type="sequence variant" id="VAR_048865" description="In dbSNP:rs16995685." evidence="3">
    <original>R</original>
    <variation>S</variation>
    <location>
        <position position="71"/>
    </location>
</feature>
<feature type="sequence conflict" description="In Ref. 5; AAM93920." evidence="5" ref="5">
    <original>PATL</original>
    <variation>QHLH</variation>
    <location>
        <begin position="74"/>
        <end position="77"/>
    </location>
</feature>
<sequence>MGLFMIIAILLFQKPTVTEQLKKCWNNYVQGHCRKICRVNEVPEALCENGRYCCLNIKELEACKKITKPPRPKPATLALTLQDYVTIIENFPSLKTQST</sequence>
<organism>
    <name type="scientific">Homo sapiens</name>
    <name type="common">Human</name>
    <dbReference type="NCBI Taxonomy" id="9606"/>
    <lineage>
        <taxon>Eukaryota</taxon>
        <taxon>Metazoa</taxon>
        <taxon>Chordata</taxon>
        <taxon>Craniata</taxon>
        <taxon>Vertebrata</taxon>
        <taxon>Euteleostomi</taxon>
        <taxon>Mammalia</taxon>
        <taxon>Eutheria</taxon>
        <taxon>Euarchontoglires</taxon>
        <taxon>Primates</taxon>
        <taxon>Haplorrhini</taxon>
        <taxon>Catarrhini</taxon>
        <taxon>Hominidae</taxon>
        <taxon>Homo</taxon>
    </lineage>
</organism>
<evidence type="ECO:0000250" key="1"/>
<evidence type="ECO:0000255" key="2"/>
<evidence type="ECO:0000269" key="3">
    <source>
    </source>
</evidence>
<evidence type="ECO:0000269" key="4">
    <source>
    </source>
</evidence>
<evidence type="ECO:0000305" key="5"/>
<keyword id="KW-0044">Antibiotic</keyword>
<keyword id="KW-0929">Antimicrobial</keyword>
<keyword id="KW-0165">Cleavage on pair of basic residues</keyword>
<keyword id="KW-0211">Defensin</keyword>
<keyword id="KW-0903">Direct protein sequencing</keyword>
<keyword id="KW-1015">Disulfide bond</keyword>
<keyword id="KW-1267">Proteomics identification</keyword>
<keyword id="KW-1185">Reference proteome</keyword>
<keyword id="KW-0964">Secreted</keyword>
<keyword id="KW-0732">Signal</keyword>
<gene>
    <name type="primary">DEFB127</name>
    <name type="synonym">C20orf73</name>
    <name type="synonym">DEFB27</name>
    <name type="ORF">UNQ1956/PRO6071</name>
</gene>
<comment type="function">
    <text evidence="5">Has antibacterial activity.</text>
</comment>
<comment type="interaction">
    <interactant intactId="EBI-10305240">
        <id>Q9H1M4</id>
    </interactant>
    <interactant intactId="EBI-13059134">
        <id>Q13520</id>
        <label>AQP6</label>
    </interactant>
    <organismsDiffer>false</organismsDiffer>
    <experiments>3</experiments>
</comment>
<comment type="interaction">
    <interactant intactId="EBI-10305240">
        <id>Q9H1M4</id>
    </interactant>
    <interactant intactId="EBI-12239061">
        <id>Q8WWH4</id>
        <label>ASZ1</label>
    </interactant>
    <organismsDiffer>false</organismsDiffer>
    <experiments>3</experiments>
</comment>
<comment type="interaction">
    <interactant intactId="EBI-10305240">
        <id>Q9H1M4</id>
    </interactant>
    <interactant intactId="EBI-448665">
        <id>Q9NWT8</id>
        <label>AURKAIP1</label>
    </interactant>
    <organismsDiffer>false</organismsDiffer>
    <experiments>3</experiments>
</comment>
<comment type="interaction">
    <interactant intactId="EBI-10305240">
        <id>Q9H1M4</id>
    </interactant>
    <interactant intactId="EBI-747430">
        <id>Q9BXK5</id>
        <label>BCL2L13</label>
    </interactant>
    <organismsDiffer>false</organismsDiffer>
    <experiments>3</experiments>
</comment>
<comment type="interaction">
    <interactant intactId="EBI-10305240">
        <id>Q9H1M4</id>
    </interactant>
    <interactant intactId="EBI-7797864">
        <id>P11912</id>
        <label>CD79A</label>
    </interactant>
    <organismsDiffer>false</organismsDiffer>
    <experiments>3</experiments>
</comment>
<comment type="interaction">
    <interactant intactId="EBI-10305240">
        <id>Q9H1M4</id>
    </interactant>
    <interactant intactId="EBI-18013275">
        <id>Q7Z7G2</id>
        <label>CPLX4</label>
    </interactant>
    <organismsDiffer>false</organismsDiffer>
    <experiments>3</experiments>
</comment>
<comment type="interaction">
    <interactant intactId="EBI-10305240">
        <id>Q9H1M4</id>
    </interactant>
    <interactant intactId="EBI-3915253">
        <id>Q15125</id>
        <label>EBP</label>
    </interactant>
    <organismsDiffer>false</organismsDiffer>
    <experiments>3</experiments>
</comment>
<comment type="interaction">
    <interactant intactId="EBI-10305240">
        <id>Q9H1M4</id>
    </interactant>
    <interactant intactId="EBI-18636064">
        <id>Q8TBP5</id>
        <label>FAM174A</label>
    </interactant>
    <organismsDiffer>false</organismsDiffer>
    <experiments>3</experiments>
</comment>
<comment type="interaction">
    <interactant intactId="EBI-10305240">
        <id>Q9H1M4</id>
    </interactant>
    <interactant intactId="EBI-373355">
        <id>Q5SR56</id>
        <label>MFSD14B</label>
    </interactant>
    <organismsDiffer>false</organismsDiffer>
    <experiments>3</experiments>
</comment>
<comment type="interaction">
    <interactant intactId="EBI-10305240">
        <id>Q9H1M4</id>
    </interactant>
    <interactant intactId="EBI-6163737">
        <id>Q8N4V1</id>
        <label>MMGT1</label>
    </interactant>
    <organismsDiffer>false</organismsDiffer>
    <experiments>3</experiments>
</comment>
<comment type="interaction">
    <interactant intactId="EBI-10305240">
        <id>Q9H1M4</id>
    </interactant>
    <interactant intactId="EBI-12204277">
        <id>Q8IYJ0</id>
        <label>PIANP</label>
    </interactant>
    <organismsDiffer>false</organismsDiffer>
    <experiments>3</experiments>
</comment>
<comment type="interaction">
    <interactant intactId="EBI-10305240">
        <id>Q9H1M4</id>
    </interactant>
    <interactant intactId="EBI-3916574">
        <id>O14948</id>
        <label>TFEC</label>
    </interactant>
    <organismsDiffer>false</organismsDiffer>
    <experiments>3</experiments>
</comment>
<comment type="subcellular location">
    <subcellularLocation>
        <location evidence="5">Secreted</location>
    </subcellularLocation>
</comment>
<comment type="similarity">
    <text evidence="5">Belongs to the beta-defensin family.</text>
</comment>
<reference key="1">
    <citation type="journal article" date="2003" name="Genomics">
        <title>Distribution of new human beta-defensin genes clustered on chromosome 20 in functionally different segments of epididymis.</title>
        <authorList>
            <person name="Rodriguez-Jimenez F.-J."/>
            <person name="Krause A."/>
            <person name="Schulz S."/>
            <person name="Forssmann W.-G."/>
            <person name="Conejo-Garcia J.-R."/>
            <person name="Schreeb R."/>
            <person name="Motzkus D."/>
        </authorList>
    </citation>
    <scope>NUCLEOTIDE SEQUENCE [MRNA]</scope>
    <source>
        <tissue>Testis</tissue>
    </source>
</reference>
<reference key="2">
    <citation type="journal article" date="2003" name="Genome Res.">
        <title>The secreted protein discovery initiative (SPDI), a large-scale effort to identify novel human secreted and transmembrane proteins: a bioinformatics assessment.</title>
        <authorList>
            <person name="Clark H.F."/>
            <person name="Gurney A.L."/>
            <person name="Abaya E."/>
            <person name="Baker K."/>
            <person name="Baldwin D.T."/>
            <person name="Brush J."/>
            <person name="Chen J."/>
            <person name="Chow B."/>
            <person name="Chui C."/>
            <person name="Crowley C."/>
            <person name="Currell B."/>
            <person name="Deuel B."/>
            <person name="Dowd P."/>
            <person name="Eaton D."/>
            <person name="Foster J.S."/>
            <person name="Grimaldi C."/>
            <person name="Gu Q."/>
            <person name="Hass P.E."/>
            <person name="Heldens S."/>
            <person name="Huang A."/>
            <person name="Kim H.S."/>
            <person name="Klimowski L."/>
            <person name="Jin Y."/>
            <person name="Johnson S."/>
            <person name="Lee J."/>
            <person name="Lewis L."/>
            <person name="Liao D."/>
            <person name="Mark M.R."/>
            <person name="Robbie E."/>
            <person name="Sanchez C."/>
            <person name="Schoenfeld J."/>
            <person name="Seshagiri S."/>
            <person name="Simmons L."/>
            <person name="Singh J."/>
            <person name="Smith V."/>
            <person name="Stinson J."/>
            <person name="Vagts A."/>
            <person name="Vandlen R.L."/>
            <person name="Watanabe C."/>
            <person name="Wieand D."/>
            <person name="Woods K."/>
            <person name="Xie M.-H."/>
            <person name="Yansura D.G."/>
            <person name="Yi S."/>
            <person name="Yu G."/>
            <person name="Yuan J."/>
            <person name="Zhang M."/>
            <person name="Zhang Z."/>
            <person name="Goddard A.D."/>
            <person name="Wood W.I."/>
            <person name="Godowski P.J."/>
            <person name="Gray A.M."/>
        </authorList>
    </citation>
    <scope>NUCLEOTIDE SEQUENCE [LARGE SCALE MRNA]</scope>
</reference>
<reference key="3">
    <citation type="journal article" date="2001" name="Nature">
        <title>The DNA sequence and comparative analysis of human chromosome 20.</title>
        <authorList>
            <person name="Deloukas P."/>
            <person name="Matthews L.H."/>
            <person name="Ashurst J.L."/>
            <person name="Burton J."/>
            <person name="Gilbert J.G.R."/>
            <person name="Jones M."/>
            <person name="Stavrides G."/>
            <person name="Almeida J.P."/>
            <person name="Babbage A.K."/>
            <person name="Bagguley C.L."/>
            <person name="Bailey J."/>
            <person name="Barlow K.F."/>
            <person name="Bates K.N."/>
            <person name="Beard L.M."/>
            <person name="Beare D.M."/>
            <person name="Beasley O.P."/>
            <person name="Bird C.P."/>
            <person name="Blakey S.E."/>
            <person name="Bridgeman A.M."/>
            <person name="Brown A.J."/>
            <person name="Buck D."/>
            <person name="Burrill W.D."/>
            <person name="Butler A.P."/>
            <person name="Carder C."/>
            <person name="Carter N.P."/>
            <person name="Chapman J.C."/>
            <person name="Clamp M."/>
            <person name="Clark G."/>
            <person name="Clark L.N."/>
            <person name="Clark S.Y."/>
            <person name="Clee C.M."/>
            <person name="Clegg S."/>
            <person name="Cobley V.E."/>
            <person name="Collier R.E."/>
            <person name="Connor R.E."/>
            <person name="Corby N.R."/>
            <person name="Coulson A."/>
            <person name="Coville G.J."/>
            <person name="Deadman R."/>
            <person name="Dhami P.D."/>
            <person name="Dunn M."/>
            <person name="Ellington A.G."/>
            <person name="Frankland J.A."/>
            <person name="Fraser A."/>
            <person name="French L."/>
            <person name="Garner P."/>
            <person name="Grafham D.V."/>
            <person name="Griffiths C."/>
            <person name="Griffiths M.N.D."/>
            <person name="Gwilliam R."/>
            <person name="Hall R.E."/>
            <person name="Hammond S."/>
            <person name="Harley J.L."/>
            <person name="Heath P.D."/>
            <person name="Ho S."/>
            <person name="Holden J.L."/>
            <person name="Howden P.J."/>
            <person name="Huckle E."/>
            <person name="Hunt A.R."/>
            <person name="Hunt S.E."/>
            <person name="Jekosch K."/>
            <person name="Johnson C.M."/>
            <person name="Johnson D."/>
            <person name="Kay M.P."/>
            <person name="Kimberley A.M."/>
            <person name="King A."/>
            <person name="Knights A."/>
            <person name="Laird G.K."/>
            <person name="Lawlor S."/>
            <person name="Lehvaeslaiho M.H."/>
            <person name="Leversha M.A."/>
            <person name="Lloyd C."/>
            <person name="Lloyd D.M."/>
            <person name="Lovell J.D."/>
            <person name="Marsh V.L."/>
            <person name="Martin S.L."/>
            <person name="McConnachie L.J."/>
            <person name="McLay K."/>
            <person name="McMurray A.A."/>
            <person name="Milne S.A."/>
            <person name="Mistry D."/>
            <person name="Moore M.J.F."/>
            <person name="Mullikin J.C."/>
            <person name="Nickerson T."/>
            <person name="Oliver K."/>
            <person name="Parker A."/>
            <person name="Patel R."/>
            <person name="Pearce T.A.V."/>
            <person name="Peck A.I."/>
            <person name="Phillimore B.J.C.T."/>
            <person name="Prathalingam S.R."/>
            <person name="Plumb R.W."/>
            <person name="Ramsay H."/>
            <person name="Rice C.M."/>
            <person name="Ross M.T."/>
            <person name="Scott C.E."/>
            <person name="Sehra H.K."/>
            <person name="Shownkeen R."/>
            <person name="Sims S."/>
            <person name="Skuce C.D."/>
            <person name="Smith M.L."/>
            <person name="Soderlund C."/>
            <person name="Steward C.A."/>
            <person name="Sulston J.E."/>
            <person name="Swann R.M."/>
            <person name="Sycamore N."/>
            <person name="Taylor R."/>
            <person name="Tee L."/>
            <person name="Thomas D.W."/>
            <person name="Thorpe A."/>
            <person name="Tracey A."/>
            <person name="Tromans A.C."/>
            <person name="Vaudin M."/>
            <person name="Wall M."/>
            <person name="Wallis J.M."/>
            <person name="Whitehead S.L."/>
            <person name="Whittaker P."/>
            <person name="Willey D.L."/>
            <person name="Williams L."/>
            <person name="Williams S.A."/>
            <person name="Wilming L."/>
            <person name="Wray P.W."/>
            <person name="Hubbard T."/>
            <person name="Durbin R.M."/>
            <person name="Bentley D.R."/>
            <person name="Beck S."/>
            <person name="Rogers J."/>
        </authorList>
    </citation>
    <scope>NUCLEOTIDE SEQUENCE [LARGE SCALE GENOMIC DNA]</scope>
</reference>
<reference key="4">
    <citation type="journal article" date="2004" name="Genome Res.">
        <title>The status, quality, and expansion of the NIH full-length cDNA project: the Mammalian Gene Collection (MGC).</title>
        <authorList>
            <consortium name="The MGC Project Team"/>
        </authorList>
    </citation>
    <scope>NUCLEOTIDE SEQUENCE [LARGE SCALE MRNA]</scope>
</reference>
<reference key="5">
    <citation type="journal article" date="2002" name="Proc. Natl. Acad. Sci. U.S.A.">
        <title>Discovery of five conserved beta-defensin gene clusters using a computational search strategy.</title>
        <authorList>
            <person name="Schutte B.C."/>
            <person name="Mitros J.P."/>
            <person name="Bartlett J.A."/>
            <person name="Walters J.D."/>
            <person name="Jia H.P."/>
            <person name="Welsh M.J."/>
            <person name="Casavant T.L."/>
            <person name="McCray P.B. Jr."/>
        </authorList>
    </citation>
    <scope>NUCLEOTIDE SEQUENCE [MRNA] OF 19-77</scope>
    <scope>IDENTIFICATION</scope>
    <scope>VARIANTS ARG-31 AND SER-71</scope>
    <source>
        <tissue>B-cell</tissue>
        <tissue>Fetal lung</tissue>
        <tissue>Testis</tissue>
    </source>
</reference>
<reference key="6">
    <citation type="journal article" date="2004" name="Protein Sci.">
        <title>Signal peptide prediction based on analysis of experimentally verified cleavage sites.</title>
        <authorList>
            <person name="Zhang Z."/>
            <person name="Henzel W.J."/>
        </authorList>
    </citation>
    <scope>PROTEIN SEQUENCE OF 21-35</scope>
</reference>
<proteinExistence type="evidence at protein level"/>
<dbReference type="EMBL" id="AF525929">
    <property type="protein sequence ID" value="AAP47222.1"/>
    <property type="molecule type" value="mRNA"/>
</dbReference>
<dbReference type="EMBL" id="AY358796">
    <property type="protein sequence ID" value="AAQ89156.1"/>
    <property type="molecule type" value="mRNA"/>
</dbReference>
<dbReference type="EMBL" id="AL360078">
    <property type="status" value="NOT_ANNOTATED_CDS"/>
    <property type="molecule type" value="Genomic_DNA"/>
</dbReference>
<dbReference type="EMBL" id="BC069486">
    <property type="protein sequence ID" value="AAH69486.1"/>
    <property type="molecule type" value="mRNA"/>
</dbReference>
<dbReference type="EMBL" id="BC109395">
    <property type="protein sequence ID" value="AAI09396.1"/>
    <property type="molecule type" value="mRNA"/>
</dbReference>
<dbReference type="EMBL" id="AY122479">
    <property type="protein sequence ID" value="AAM93920.1"/>
    <property type="molecule type" value="mRNA"/>
</dbReference>
<dbReference type="CCDS" id="CCDS12991.1"/>
<dbReference type="RefSeq" id="NP_620713.1">
    <property type="nucleotide sequence ID" value="NM_139074.4"/>
</dbReference>
<dbReference type="SMR" id="Q9H1M4"/>
<dbReference type="BioGRID" id="126734">
    <property type="interactions" value="26"/>
</dbReference>
<dbReference type="FunCoup" id="Q9H1M4">
    <property type="interactions" value="11"/>
</dbReference>
<dbReference type="IntAct" id="Q9H1M4">
    <property type="interactions" value="24"/>
</dbReference>
<dbReference type="STRING" id="9606.ENSP00000371825"/>
<dbReference type="BioMuta" id="DEFB127"/>
<dbReference type="DMDM" id="23813958"/>
<dbReference type="MassIVE" id="Q9H1M4"/>
<dbReference type="PaxDb" id="9606-ENSP00000371825"/>
<dbReference type="PeptideAtlas" id="Q9H1M4"/>
<dbReference type="ProteomicsDB" id="80430"/>
<dbReference type="DNASU" id="140850"/>
<dbReference type="Ensembl" id="ENST00000382388.4">
    <property type="protein sequence ID" value="ENSP00000371825.3"/>
    <property type="gene ID" value="ENSG00000088782.5"/>
</dbReference>
<dbReference type="GeneID" id="140850"/>
<dbReference type="KEGG" id="hsa:140850"/>
<dbReference type="MANE-Select" id="ENST00000382388.4">
    <property type="protein sequence ID" value="ENSP00000371825.3"/>
    <property type="RefSeq nucleotide sequence ID" value="NM_139074.4"/>
    <property type="RefSeq protein sequence ID" value="NP_620713.1"/>
</dbReference>
<dbReference type="UCSC" id="uc002wcy.2">
    <property type="organism name" value="human"/>
</dbReference>
<dbReference type="AGR" id="HGNC:16206"/>
<dbReference type="CTD" id="140850"/>
<dbReference type="DisGeNET" id="140850"/>
<dbReference type="GeneCards" id="DEFB127"/>
<dbReference type="HGNC" id="HGNC:16206">
    <property type="gene designation" value="DEFB127"/>
</dbReference>
<dbReference type="HPA" id="ENSG00000088782">
    <property type="expression patterns" value="Tissue enriched (epididymis)"/>
</dbReference>
<dbReference type="neXtProt" id="NX_Q9H1M4"/>
<dbReference type="PharmGKB" id="PA27247"/>
<dbReference type="VEuPathDB" id="HostDB:ENSG00000088782"/>
<dbReference type="eggNOG" id="ENOG502TFAJ">
    <property type="taxonomic scope" value="Eukaryota"/>
</dbReference>
<dbReference type="GeneTree" id="ENSGT00530000064502"/>
<dbReference type="HOGENOM" id="CLU_181906_1_0_1"/>
<dbReference type="InParanoid" id="Q9H1M4"/>
<dbReference type="OMA" id="KKCWGEY"/>
<dbReference type="OrthoDB" id="9833815at2759"/>
<dbReference type="PAN-GO" id="Q9H1M4">
    <property type="GO annotations" value="1 GO annotation based on evolutionary models"/>
</dbReference>
<dbReference type="PhylomeDB" id="Q9H1M4"/>
<dbReference type="PathwayCommons" id="Q9H1M4"/>
<dbReference type="Reactome" id="R-HSA-1461957">
    <property type="pathway name" value="Beta defensins"/>
</dbReference>
<dbReference type="Reactome" id="R-HSA-1461973">
    <property type="pathway name" value="Defensins"/>
</dbReference>
<dbReference type="SignaLink" id="Q9H1M4"/>
<dbReference type="BioGRID-ORCS" id="140850">
    <property type="hits" value="8 hits in 1071 CRISPR screens"/>
</dbReference>
<dbReference type="GeneWiki" id="DEFB127"/>
<dbReference type="GenomeRNAi" id="140850"/>
<dbReference type="Pharos" id="Q9H1M4">
    <property type="development level" value="Tbio"/>
</dbReference>
<dbReference type="PRO" id="PR:Q9H1M4"/>
<dbReference type="Proteomes" id="UP000005640">
    <property type="component" value="Chromosome 20"/>
</dbReference>
<dbReference type="RNAct" id="Q9H1M4">
    <property type="molecule type" value="protein"/>
</dbReference>
<dbReference type="Bgee" id="ENSG00000088782">
    <property type="expression patterns" value="Expressed in corpus epididymis and 7 other cell types or tissues"/>
</dbReference>
<dbReference type="GO" id="GO:0005576">
    <property type="term" value="C:extracellular region"/>
    <property type="evidence" value="ECO:0007669"/>
    <property type="project" value="UniProtKB-SubCell"/>
</dbReference>
<dbReference type="GO" id="GO:0061844">
    <property type="term" value="P:antimicrobial humoral immune response mediated by antimicrobial peptide"/>
    <property type="evidence" value="ECO:0000314"/>
    <property type="project" value="UniProtKB"/>
</dbReference>
<dbReference type="GO" id="GO:0042742">
    <property type="term" value="P:defense response to bacterium"/>
    <property type="evidence" value="ECO:0000304"/>
    <property type="project" value="UniProtKB"/>
</dbReference>
<dbReference type="GO" id="GO:0050829">
    <property type="term" value="P:defense response to Gram-negative bacterium"/>
    <property type="evidence" value="ECO:0000314"/>
    <property type="project" value="UniProtKB"/>
</dbReference>
<dbReference type="GO" id="GO:0045087">
    <property type="term" value="P:innate immune response"/>
    <property type="evidence" value="ECO:0000304"/>
    <property type="project" value="UniProtKB"/>
</dbReference>
<dbReference type="InterPro" id="IPR050544">
    <property type="entry name" value="Beta-defensin"/>
</dbReference>
<dbReference type="InterPro" id="IPR025933">
    <property type="entry name" value="Beta_defensin_dom"/>
</dbReference>
<dbReference type="PANTHER" id="PTHR15001:SF3">
    <property type="entry name" value="BETA-DEFENSIN 123"/>
    <property type="match status" value="1"/>
</dbReference>
<dbReference type="PANTHER" id="PTHR15001">
    <property type="entry name" value="BETA-DEFENSIN 123-RELATED"/>
    <property type="match status" value="1"/>
</dbReference>
<dbReference type="Pfam" id="PF13841">
    <property type="entry name" value="Defensin_beta_2"/>
    <property type="match status" value="1"/>
</dbReference>